<comment type="function">
    <text evidence="1">Specifically methylates the guanine in position 1207 of 16S rRNA in the 30S particle.</text>
</comment>
<comment type="catalytic activity">
    <reaction evidence="1">
        <text>guanosine(1207) in 16S rRNA + S-adenosyl-L-methionine = N(2)-methylguanosine(1207) in 16S rRNA + S-adenosyl-L-homocysteine + H(+)</text>
        <dbReference type="Rhea" id="RHEA:42736"/>
        <dbReference type="Rhea" id="RHEA-COMP:10213"/>
        <dbReference type="Rhea" id="RHEA-COMP:10214"/>
        <dbReference type="ChEBI" id="CHEBI:15378"/>
        <dbReference type="ChEBI" id="CHEBI:57856"/>
        <dbReference type="ChEBI" id="CHEBI:59789"/>
        <dbReference type="ChEBI" id="CHEBI:74269"/>
        <dbReference type="ChEBI" id="CHEBI:74481"/>
        <dbReference type="EC" id="2.1.1.172"/>
    </reaction>
</comment>
<comment type="subunit">
    <text evidence="1">Monomer.</text>
</comment>
<comment type="subcellular location">
    <subcellularLocation>
        <location evidence="1">Cytoplasm</location>
    </subcellularLocation>
</comment>
<comment type="similarity">
    <text evidence="1">Belongs to the methyltransferase superfamily. RsmC family.</text>
</comment>
<keyword id="KW-0963">Cytoplasm</keyword>
<keyword id="KW-0489">Methyltransferase</keyword>
<keyword id="KW-0698">rRNA processing</keyword>
<keyword id="KW-0949">S-adenosyl-L-methionine</keyword>
<keyword id="KW-0808">Transferase</keyword>
<protein>
    <recommendedName>
        <fullName evidence="1">Ribosomal RNA small subunit methyltransferase C</fullName>
        <ecNumber evidence="1">2.1.1.172</ecNumber>
    </recommendedName>
    <alternativeName>
        <fullName evidence="1">16S rRNA m2G1207 methyltransferase</fullName>
    </alternativeName>
    <alternativeName>
        <fullName evidence="1">rRNA (guanine-N(2)-)-methyltransferase RsmC</fullName>
    </alternativeName>
</protein>
<dbReference type="EC" id="2.1.1.172" evidence="1"/>
<dbReference type="EMBL" id="CU459141">
    <property type="protein sequence ID" value="CAM85610.1"/>
    <property type="molecule type" value="Genomic_DNA"/>
</dbReference>
<dbReference type="RefSeq" id="WP_000371532.1">
    <property type="nucleotide sequence ID" value="NZ_JBDGFB010000017.1"/>
</dbReference>
<dbReference type="SMR" id="B0V4Z1"/>
<dbReference type="EnsemblBacteria" id="CAM85610">
    <property type="protein sequence ID" value="CAM85610"/>
    <property type="gene ID" value="ABAYE0644"/>
</dbReference>
<dbReference type="KEGG" id="aby:ABAYE0644"/>
<dbReference type="HOGENOM" id="CLU_049581_0_0_6"/>
<dbReference type="GO" id="GO:0005737">
    <property type="term" value="C:cytoplasm"/>
    <property type="evidence" value="ECO:0007669"/>
    <property type="project" value="UniProtKB-SubCell"/>
</dbReference>
<dbReference type="GO" id="GO:0052914">
    <property type="term" value="F:16S rRNA (guanine(1207)-N(2))-methyltransferase activity"/>
    <property type="evidence" value="ECO:0007669"/>
    <property type="project" value="UniProtKB-EC"/>
</dbReference>
<dbReference type="GO" id="GO:0003676">
    <property type="term" value="F:nucleic acid binding"/>
    <property type="evidence" value="ECO:0007669"/>
    <property type="project" value="InterPro"/>
</dbReference>
<dbReference type="CDD" id="cd02440">
    <property type="entry name" value="AdoMet_MTases"/>
    <property type="match status" value="1"/>
</dbReference>
<dbReference type="Gene3D" id="3.40.50.150">
    <property type="entry name" value="Vaccinia Virus protein VP39"/>
    <property type="match status" value="2"/>
</dbReference>
<dbReference type="HAMAP" id="MF_01862">
    <property type="entry name" value="16SrRNA_methyltr_C"/>
    <property type="match status" value="1"/>
</dbReference>
<dbReference type="InterPro" id="IPR002052">
    <property type="entry name" value="DNA_methylase_N6_adenine_CS"/>
</dbReference>
<dbReference type="InterPro" id="IPR013675">
    <property type="entry name" value="Mtase_sm_N"/>
</dbReference>
<dbReference type="InterPro" id="IPR023543">
    <property type="entry name" value="rRNA_ssu_MeTfrase_C"/>
</dbReference>
<dbReference type="InterPro" id="IPR046977">
    <property type="entry name" value="RsmC/RlmG"/>
</dbReference>
<dbReference type="InterPro" id="IPR029063">
    <property type="entry name" value="SAM-dependent_MTases_sf"/>
</dbReference>
<dbReference type="InterPro" id="IPR007848">
    <property type="entry name" value="Small_mtfrase_dom"/>
</dbReference>
<dbReference type="PANTHER" id="PTHR47816">
    <property type="entry name" value="RIBOSOMAL RNA SMALL SUBUNIT METHYLTRANSFERASE C"/>
    <property type="match status" value="1"/>
</dbReference>
<dbReference type="PANTHER" id="PTHR47816:SF4">
    <property type="entry name" value="RIBOSOMAL RNA SMALL SUBUNIT METHYLTRANSFERASE C"/>
    <property type="match status" value="1"/>
</dbReference>
<dbReference type="Pfam" id="PF05175">
    <property type="entry name" value="MTS"/>
    <property type="match status" value="1"/>
</dbReference>
<dbReference type="Pfam" id="PF08468">
    <property type="entry name" value="MTS_N"/>
    <property type="match status" value="1"/>
</dbReference>
<dbReference type="SUPFAM" id="SSF53335">
    <property type="entry name" value="S-adenosyl-L-methionine-dependent methyltransferases"/>
    <property type="match status" value="1"/>
</dbReference>
<evidence type="ECO:0000255" key="1">
    <source>
        <dbReference type="HAMAP-Rule" id="MF_01862"/>
    </source>
</evidence>
<name>RSMC_ACIBY</name>
<proteinExistence type="inferred from homology"/>
<reference key="1">
    <citation type="journal article" date="2008" name="PLoS ONE">
        <title>Comparative analysis of Acinetobacters: three genomes for three lifestyles.</title>
        <authorList>
            <person name="Vallenet D."/>
            <person name="Nordmann P."/>
            <person name="Barbe V."/>
            <person name="Poirel L."/>
            <person name="Mangenot S."/>
            <person name="Bataille E."/>
            <person name="Dossat C."/>
            <person name="Gas S."/>
            <person name="Kreimeyer A."/>
            <person name="Lenoble P."/>
            <person name="Oztas S."/>
            <person name="Poulain J."/>
            <person name="Segurens B."/>
            <person name="Robert C."/>
            <person name="Abergel C."/>
            <person name="Claverie J.-M."/>
            <person name="Raoult D."/>
            <person name="Medigue C."/>
            <person name="Weissenbach J."/>
            <person name="Cruveiller S."/>
        </authorList>
    </citation>
    <scope>NUCLEOTIDE SEQUENCE [LARGE SCALE GENOMIC DNA]</scope>
    <source>
        <strain>AYE</strain>
    </source>
</reference>
<gene>
    <name evidence="1" type="primary">rsmC</name>
    <name type="ordered locus">ABAYE0644</name>
</gene>
<accession>B0V4Z1</accession>
<organism>
    <name type="scientific">Acinetobacter baumannii (strain AYE)</name>
    <dbReference type="NCBI Taxonomy" id="509173"/>
    <lineage>
        <taxon>Bacteria</taxon>
        <taxon>Pseudomonadati</taxon>
        <taxon>Pseudomonadota</taxon>
        <taxon>Gammaproteobacteria</taxon>
        <taxon>Moraxellales</taxon>
        <taxon>Moraxellaceae</taxon>
        <taxon>Acinetobacter</taxon>
        <taxon>Acinetobacter calcoaceticus/baumannii complex</taxon>
    </lineage>
</organism>
<sequence>MDPRSEVILRQQDYLKGRVLLINAPNDALVSQLPTEIDASVWTWNYADYQGFVNTGTPAHFSVEFPSQEFDQAIIFVPKSKELLNYILHVVMSHLKTDQSVFLVGEKKGGVERAAKQLQNFGTILKLDSARHCQLWHLKIEKIEKIKPLESWLKTYTVQVNGQELTICALPGVFSQTHLDVGTAVLLPYLNQVKSGRIADFGCGAGIISCYLAKANSSNIIHALDIDAFALQSTEMTFSRNGIGSDQLRLQPVTGIADAPTELDAIVSNPPFHQGIHTNYDASEGLCQNAKKHLKASGELWIVANRFLNYPILIEKHFGQCEIKTDLQGFKVLYACA</sequence>
<feature type="chain" id="PRO_0000369678" description="Ribosomal RNA small subunit methyltransferase C">
    <location>
        <begin position="1"/>
        <end position="337"/>
    </location>
</feature>